<keyword id="KW-0002">3D-structure</keyword>
<keyword id="KW-0052">Apoplast</keyword>
<keyword id="KW-0217">Developmental protein</keyword>
<keyword id="KW-0903">Direct protein sequencing</keyword>
<keyword id="KW-1015">Disulfide bond</keyword>
<keyword id="KW-1185">Reference proteome</keyword>
<keyword id="KW-0964">Secreted</keyword>
<keyword id="KW-0732">Signal</keyword>
<gene>
    <name evidence="7" type="primary">EPFL9</name>
    <name evidence="8" type="synonym">STOMAGEN</name>
    <name evidence="9" type="ordered locus">At4g12970</name>
    <name type="ORF">F25G13.60</name>
</gene>
<feature type="signal peptide" evidence="1">
    <location>
        <begin position="1"/>
        <end position="31"/>
    </location>
</feature>
<feature type="chain" id="PRO_0000392507" description="EPIDERMAL PATTERNING FACTOR-like protein 9">
    <location>
        <begin position="32"/>
        <end position="102"/>
    </location>
</feature>
<feature type="chain" id="PRO_0000430515" description="Stomagen" evidence="3 4">
    <location>
        <begin position="58"/>
        <end position="102"/>
    </location>
</feature>
<feature type="disulfide bond" evidence="2 4">
    <location>
        <begin position="65"/>
        <end position="98"/>
    </location>
</feature>
<feature type="disulfide bond" evidence="2 4">
    <location>
        <begin position="70"/>
        <end position="77"/>
    </location>
</feature>
<feature type="disulfide bond" evidence="2 4">
    <location>
        <begin position="73"/>
        <end position="100"/>
    </location>
</feature>
<feature type="mutagenesis site" description="Incorrect disulfide bonds formation and loss of activity; when associated with S-98. Unstructured protein and loss of activity; when associated with S-70; S-73; S-77; S-98 and S-100." evidence="4">
    <original>C</original>
    <variation>S</variation>
    <location>
        <position position="65"/>
    </location>
</feature>
<feature type="mutagenesis site" description="Incorrect disulfide bonds formation and loss of activity; when associated with S-77. Unstructured protein and loss of activity; when associated with S-65; S-73; S-77; S-98 and S-100." evidence="4">
    <original>C</original>
    <variation>S</variation>
    <location>
        <position position="70"/>
    </location>
</feature>
<feature type="mutagenesis site" description="Incorrect disulfide bonds formation and loss of activity; when associated with S-100. Unstructured protein and loss of activity; when associated with S-65; S-70; S-77; S-98 and S-100." evidence="4">
    <original>C</original>
    <variation>S</variation>
    <location>
        <position position="73"/>
    </location>
</feature>
<feature type="mutagenesis site" description="Incorrect disulfide bonds formation and loss of activity; when associated with S-70. Unstructured protein and loss of activity; when associated with S-65; S-70; S-73; S-98 and S-100." evidence="4">
    <original>C</original>
    <variation>S</variation>
    <location>
        <position position="77"/>
    </location>
</feature>
<feature type="mutagenesis site" description="No effect on conformation, but decreased activity." evidence="4">
    <original>E</original>
    <variation>A</variation>
    <location>
        <position position="85"/>
    </location>
</feature>
<feature type="mutagenesis site" description="No effect on conformation or activity." evidence="4">
    <original>D</original>
    <variation>A</variation>
    <location>
        <position position="88"/>
    </location>
</feature>
<feature type="mutagenesis site" description="Incorrect disulfide bonds formation and loss of activity; when associated with S-65. Unstructured protein and loss of activity; when associated with S-65; S-70; S-73; S-77 and S-100." evidence="4">
    <original>C</original>
    <variation>S</variation>
    <location>
        <position position="98"/>
    </location>
</feature>
<feature type="mutagenesis site" description="Incorrect disulfide bonds formation and loss of activity; when associated with S-73. Unstructured protein and loss of activity; when associated with S-65; S-70; S-73; S-77 and S-98." evidence="4">
    <original>C</original>
    <variation>S</variation>
    <location>
        <position position="100"/>
    </location>
</feature>
<feature type="turn" evidence="10">
    <location>
        <begin position="62"/>
        <end position="65"/>
    </location>
</feature>
<feature type="helix" evidence="10">
    <location>
        <begin position="67"/>
        <end position="70"/>
    </location>
</feature>
<feature type="strand" evidence="10">
    <location>
        <begin position="75"/>
        <end position="85"/>
    </location>
</feature>
<feature type="strand" evidence="10">
    <location>
        <begin position="87"/>
        <end position="89"/>
    </location>
</feature>
<feature type="strand" evidence="10">
    <location>
        <begin position="94"/>
        <end position="101"/>
    </location>
</feature>
<dbReference type="EMBL" id="AL079349">
    <property type="protein sequence ID" value="CAB45496.1"/>
    <property type="molecule type" value="Genomic_DNA"/>
</dbReference>
<dbReference type="EMBL" id="AL161535">
    <property type="protein sequence ID" value="CAB78339.1"/>
    <property type="molecule type" value="Genomic_DNA"/>
</dbReference>
<dbReference type="EMBL" id="CP002687">
    <property type="protein sequence ID" value="AEE83209.1"/>
    <property type="molecule type" value="Genomic_DNA"/>
</dbReference>
<dbReference type="EMBL" id="AK175876">
    <property type="protein sequence ID" value="BAD43639.1"/>
    <property type="molecule type" value="mRNA"/>
</dbReference>
<dbReference type="PIR" id="T10199">
    <property type="entry name" value="T10199"/>
</dbReference>
<dbReference type="RefSeq" id="NP_193033.1">
    <property type="nucleotide sequence ID" value="NM_117366.4"/>
</dbReference>
<dbReference type="PDB" id="2LIY">
    <property type="method" value="NMR"/>
    <property type="chains" value="A=58-102"/>
</dbReference>
<dbReference type="PDBsum" id="2LIY"/>
<dbReference type="BMRB" id="Q9SV72"/>
<dbReference type="SMR" id="Q9SV72"/>
<dbReference type="FunCoup" id="Q9SV72">
    <property type="interactions" value="82"/>
</dbReference>
<dbReference type="STRING" id="3702.Q9SV72"/>
<dbReference type="PaxDb" id="3702-AT4G12970.1"/>
<dbReference type="ProteomicsDB" id="220665"/>
<dbReference type="DNASU" id="826909"/>
<dbReference type="EnsemblPlants" id="AT4G12970.1">
    <property type="protein sequence ID" value="AT4G12970.1"/>
    <property type="gene ID" value="AT4G12970"/>
</dbReference>
<dbReference type="GeneID" id="826909"/>
<dbReference type="Gramene" id="AT4G12970.1">
    <property type="protein sequence ID" value="AT4G12970.1"/>
    <property type="gene ID" value="AT4G12970"/>
</dbReference>
<dbReference type="KEGG" id="ath:AT4G12970"/>
<dbReference type="Araport" id="AT4G12970"/>
<dbReference type="TAIR" id="AT4G12970">
    <property type="gene designation" value="STOMAGEN"/>
</dbReference>
<dbReference type="eggNOG" id="ENOG502S4I2">
    <property type="taxonomic scope" value="Eukaryota"/>
</dbReference>
<dbReference type="HOGENOM" id="CLU_164346_0_0_1"/>
<dbReference type="InParanoid" id="Q9SV72"/>
<dbReference type="OMA" id="MKHEMMN"/>
<dbReference type="PhylomeDB" id="Q9SV72"/>
<dbReference type="EvolutionaryTrace" id="Q9SV72"/>
<dbReference type="PRO" id="PR:Q9SV72"/>
<dbReference type="Proteomes" id="UP000006548">
    <property type="component" value="Chromosome 4"/>
</dbReference>
<dbReference type="ExpressionAtlas" id="Q9SV72">
    <property type="expression patterns" value="baseline and differential"/>
</dbReference>
<dbReference type="GO" id="GO:0048046">
    <property type="term" value="C:apoplast"/>
    <property type="evidence" value="ECO:0007669"/>
    <property type="project" value="UniProtKB-SubCell"/>
</dbReference>
<dbReference type="GO" id="GO:0019901">
    <property type="term" value="F:protein kinase binding"/>
    <property type="evidence" value="ECO:0000353"/>
    <property type="project" value="TAIR"/>
</dbReference>
<dbReference type="GO" id="GO:0033612">
    <property type="term" value="F:receptor serine/threonine kinase binding"/>
    <property type="evidence" value="ECO:0000353"/>
    <property type="project" value="UniProtKB"/>
</dbReference>
<dbReference type="GO" id="GO:0005102">
    <property type="term" value="F:signaling receptor binding"/>
    <property type="evidence" value="ECO:0000353"/>
    <property type="project" value="UniProtKB"/>
</dbReference>
<dbReference type="GO" id="GO:0007267">
    <property type="term" value="P:cell-cell signaling"/>
    <property type="evidence" value="ECO:0000303"/>
    <property type="project" value="TAIR"/>
</dbReference>
<dbReference type="GO" id="GO:0010052">
    <property type="term" value="P:guard cell differentiation"/>
    <property type="evidence" value="ECO:0000250"/>
    <property type="project" value="UniProtKB"/>
</dbReference>
<dbReference type="GO" id="GO:2000123">
    <property type="term" value="P:positive regulation of stomatal complex development"/>
    <property type="evidence" value="ECO:0000314"/>
    <property type="project" value="TAIR"/>
</dbReference>
<dbReference type="GO" id="GO:2000038">
    <property type="term" value="P:regulation of stomatal complex development"/>
    <property type="evidence" value="ECO:0000315"/>
    <property type="project" value="TAIR"/>
</dbReference>
<dbReference type="GO" id="GO:0010374">
    <property type="term" value="P:stomatal complex development"/>
    <property type="evidence" value="ECO:0000250"/>
    <property type="project" value="UniProtKB"/>
</dbReference>
<dbReference type="GO" id="GO:0010375">
    <property type="term" value="P:stomatal complex patterning"/>
    <property type="evidence" value="ECO:0000314"/>
    <property type="project" value="TAIR"/>
</dbReference>
<dbReference type="CDD" id="cd22743">
    <property type="entry name" value="stomagen-like"/>
    <property type="match status" value="1"/>
</dbReference>
<dbReference type="FunFam" id="2.20.25.390:FF:000001">
    <property type="entry name" value="EPIDERMAL PATTERNING FACTOR-like protein 9"/>
    <property type="match status" value="1"/>
</dbReference>
<dbReference type="Gene3D" id="2.20.25.390">
    <property type="entry name" value="Stomagen"/>
    <property type="match status" value="1"/>
</dbReference>
<dbReference type="InterPro" id="IPR031753">
    <property type="entry name" value="Stomagen"/>
</dbReference>
<dbReference type="InterPro" id="IPR044858">
    <property type="entry name" value="Stomagen_C"/>
</dbReference>
<dbReference type="InterPro" id="IPR038572">
    <property type="entry name" value="Stomagen_C_sf"/>
</dbReference>
<dbReference type="PANTHER" id="PTHR37239">
    <property type="entry name" value="EPIDERMAL PATTERNING FACTOR-LIKE PROTEIN 9"/>
    <property type="match status" value="1"/>
</dbReference>
<dbReference type="PANTHER" id="PTHR37239:SF1">
    <property type="entry name" value="EPIDERMAL PATTERNING FACTOR-LIKE PROTEIN 9"/>
    <property type="match status" value="1"/>
</dbReference>
<dbReference type="Pfam" id="PF16851">
    <property type="entry name" value="Stomagen"/>
    <property type="match status" value="1"/>
</dbReference>
<evidence type="ECO:0000255" key="1"/>
<evidence type="ECO:0000269" key="2">
    <source>
    </source>
</evidence>
<evidence type="ECO:0000269" key="3">
    <source>
    </source>
</evidence>
<evidence type="ECO:0000269" key="4">
    <source>
    </source>
</evidence>
<evidence type="ECO:0000269" key="5">
    <source>
    </source>
</evidence>
<evidence type="ECO:0000269" key="6">
    <source>
    </source>
</evidence>
<evidence type="ECO:0000303" key="7">
    <source>
    </source>
</evidence>
<evidence type="ECO:0000303" key="8">
    <source>
    </source>
</evidence>
<evidence type="ECO:0000312" key="9">
    <source>
        <dbReference type="Araport" id="AT4G12970"/>
    </source>
</evidence>
<evidence type="ECO:0007829" key="10">
    <source>
        <dbReference type="PDB" id="2LIY"/>
    </source>
</evidence>
<protein>
    <recommendedName>
        <fullName evidence="7">EPIDERMAL PATTERNING FACTOR-like protein 9</fullName>
        <shortName>EPF-like protein 9</shortName>
    </recommendedName>
    <component>
        <recommendedName>
            <fullName evidence="8">Stomagen</fullName>
        </recommendedName>
    </component>
</protein>
<proteinExistence type="evidence at protein level"/>
<accession>Q9SV72</accession>
<name>EPFL9_ARATH</name>
<comment type="function">
    <molecule>Stomagen</molecule>
    <text evidence="2 3 4 5 6">Positively regulates stomatal density and patterning. Acts by competing with EPF2 (AC Q8LC53) for the same receptors, ERECTA (AC Q42371) and TMM (AC Q9SSD1). Not cleaved by the protease CRSP (AC Q9LNU1) (PubMed:25043023).</text>
</comment>
<comment type="subunit">
    <text evidence="6">Interacts with ERECTA and TMM.</text>
</comment>
<comment type="subcellular location">
    <subcellularLocation>
        <location evidence="2 3">Secreted</location>
        <location evidence="2 3">Extracellular space</location>
        <location evidence="2 3">Apoplast</location>
    </subcellularLocation>
    <subcellularLocation>
        <location evidence="2 3">Secreted</location>
    </subcellularLocation>
</comment>
<comment type="tissue specificity">
    <text evidence="2 3">Expressed in immature organs, including leaves, stems and flower buds, but not in roots, shoot apical meristem and petals. Detected in the mesophyll tissues but not in the epidermal tissues where stomata develop.</text>
</comment>
<comment type="domain">
    <text evidence="4">The loop (82-95) connecting the two anti-parallel beta-strands (76-81 and 96-101) confers the function to the peptide.</text>
</comment>
<comment type="disruption phenotype">
    <text evidence="3">Reduced stomatal densities in various organs.</text>
</comment>
<comment type="similarity">
    <text evidence="7">Belongs to the plant cysteine rich small secretory peptide family. Epidermal patterning factor subfamily.</text>
</comment>
<organism>
    <name type="scientific">Arabidopsis thaliana</name>
    <name type="common">Mouse-ear cress</name>
    <dbReference type="NCBI Taxonomy" id="3702"/>
    <lineage>
        <taxon>Eukaryota</taxon>
        <taxon>Viridiplantae</taxon>
        <taxon>Streptophyta</taxon>
        <taxon>Embryophyta</taxon>
        <taxon>Tracheophyta</taxon>
        <taxon>Spermatophyta</taxon>
        <taxon>Magnoliopsida</taxon>
        <taxon>eudicotyledons</taxon>
        <taxon>Gunneridae</taxon>
        <taxon>Pentapetalae</taxon>
        <taxon>rosids</taxon>
        <taxon>malvids</taxon>
        <taxon>Brassicales</taxon>
        <taxon>Brassicaceae</taxon>
        <taxon>Camelineae</taxon>
        <taxon>Arabidopsis</taxon>
    </lineage>
</organism>
<sequence>MKHEMMNIKPRCITIFFLLFALLLGNYVVQASRPRSIENTVSLLPQVHLLNSRRRHMIGSTAPTCTYNECRGCRYKCRAEQVPVEGNDPINSAYHYRCVCHR</sequence>
<reference key="1">
    <citation type="journal article" date="1999" name="Nature">
        <title>Sequence and analysis of chromosome 4 of the plant Arabidopsis thaliana.</title>
        <authorList>
            <person name="Mayer K.F.X."/>
            <person name="Schueller C."/>
            <person name="Wambutt R."/>
            <person name="Murphy G."/>
            <person name="Volckaert G."/>
            <person name="Pohl T."/>
            <person name="Duesterhoeft A."/>
            <person name="Stiekema W."/>
            <person name="Entian K.-D."/>
            <person name="Terryn N."/>
            <person name="Harris B."/>
            <person name="Ansorge W."/>
            <person name="Brandt P."/>
            <person name="Grivell L.A."/>
            <person name="Rieger M."/>
            <person name="Weichselgartner M."/>
            <person name="de Simone V."/>
            <person name="Obermaier B."/>
            <person name="Mache R."/>
            <person name="Mueller M."/>
            <person name="Kreis M."/>
            <person name="Delseny M."/>
            <person name="Puigdomenech P."/>
            <person name="Watson M."/>
            <person name="Schmidtheini T."/>
            <person name="Reichert B."/>
            <person name="Portetelle D."/>
            <person name="Perez-Alonso M."/>
            <person name="Boutry M."/>
            <person name="Bancroft I."/>
            <person name="Vos P."/>
            <person name="Hoheisel J."/>
            <person name="Zimmermann W."/>
            <person name="Wedler H."/>
            <person name="Ridley P."/>
            <person name="Langham S.-A."/>
            <person name="McCullagh B."/>
            <person name="Bilham L."/>
            <person name="Robben J."/>
            <person name="van der Schueren J."/>
            <person name="Grymonprez B."/>
            <person name="Chuang Y.-J."/>
            <person name="Vandenbussche F."/>
            <person name="Braeken M."/>
            <person name="Weltjens I."/>
            <person name="Voet M."/>
            <person name="Bastiaens I."/>
            <person name="Aert R."/>
            <person name="Defoor E."/>
            <person name="Weitzenegger T."/>
            <person name="Bothe G."/>
            <person name="Ramsperger U."/>
            <person name="Hilbert H."/>
            <person name="Braun M."/>
            <person name="Holzer E."/>
            <person name="Brandt A."/>
            <person name="Peters S."/>
            <person name="van Staveren M."/>
            <person name="Dirkse W."/>
            <person name="Mooijman P."/>
            <person name="Klein Lankhorst R."/>
            <person name="Rose M."/>
            <person name="Hauf J."/>
            <person name="Koetter P."/>
            <person name="Berneiser S."/>
            <person name="Hempel S."/>
            <person name="Feldpausch M."/>
            <person name="Lamberth S."/>
            <person name="Van den Daele H."/>
            <person name="De Keyser A."/>
            <person name="Buysshaert C."/>
            <person name="Gielen J."/>
            <person name="Villarroel R."/>
            <person name="De Clercq R."/>
            <person name="van Montagu M."/>
            <person name="Rogers J."/>
            <person name="Cronin A."/>
            <person name="Quail M.A."/>
            <person name="Bray-Allen S."/>
            <person name="Clark L."/>
            <person name="Doggett J."/>
            <person name="Hall S."/>
            <person name="Kay M."/>
            <person name="Lennard N."/>
            <person name="McLay K."/>
            <person name="Mayes R."/>
            <person name="Pettett A."/>
            <person name="Rajandream M.A."/>
            <person name="Lyne M."/>
            <person name="Benes V."/>
            <person name="Rechmann S."/>
            <person name="Borkova D."/>
            <person name="Bloecker H."/>
            <person name="Scharfe M."/>
            <person name="Grimm M."/>
            <person name="Loehnert T.-H."/>
            <person name="Dose S."/>
            <person name="de Haan M."/>
            <person name="Maarse A.C."/>
            <person name="Schaefer M."/>
            <person name="Mueller-Auer S."/>
            <person name="Gabel C."/>
            <person name="Fuchs M."/>
            <person name="Fartmann B."/>
            <person name="Granderath K."/>
            <person name="Dauner D."/>
            <person name="Herzl A."/>
            <person name="Neumann S."/>
            <person name="Argiriou A."/>
            <person name="Vitale D."/>
            <person name="Liguori R."/>
            <person name="Piravandi E."/>
            <person name="Massenet O."/>
            <person name="Quigley F."/>
            <person name="Clabauld G."/>
            <person name="Muendlein A."/>
            <person name="Felber R."/>
            <person name="Schnabl S."/>
            <person name="Hiller R."/>
            <person name="Schmidt W."/>
            <person name="Lecharny A."/>
            <person name="Aubourg S."/>
            <person name="Chefdor F."/>
            <person name="Cooke R."/>
            <person name="Berger C."/>
            <person name="Monfort A."/>
            <person name="Casacuberta E."/>
            <person name="Gibbons T."/>
            <person name="Weber N."/>
            <person name="Vandenbol M."/>
            <person name="Bargues M."/>
            <person name="Terol J."/>
            <person name="Torres A."/>
            <person name="Perez-Perez A."/>
            <person name="Purnelle B."/>
            <person name="Bent E."/>
            <person name="Johnson S."/>
            <person name="Tacon D."/>
            <person name="Jesse T."/>
            <person name="Heijnen L."/>
            <person name="Schwarz S."/>
            <person name="Scholler P."/>
            <person name="Heber S."/>
            <person name="Francs P."/>
            <person name="Bielke C."/>
            <person name="Frishman D."/>
            <person name="Haase D."/>
            <person name="Lemcke K."/>
            <person name="Mewes H.-W."/>
            <person name="Stocker S."/>
            <person name="Zaccaria P."/>
            <person name="Bevan M."/>
            <person name="Wilson R.K."/>
            <person name="de la Bastide M."/>
            <person name="Habermann K."/>
            <person name="Parnell L."/>
            <person name="Dedhia N."/>
            <person name="Gnoj L."/>
            <person name="Schutz K."/>
            <person name="Huang E."/>
            <person name="Spiegel L."/>
            <person name="Sekhon M."/>
            <person name="Murray J."/>
            <person name="Sheet P."/>
            <person name="Cordes M."/>
            <person name="Abu-Threideh J."/>
            <person name="Stoneking T."/>
            <person name="Kalicki J."/>
            <person name="Graves T."/>
            <person name="Harmon G."/>
            <person name="Edwards J."/>
            <person name="Latreille P."/>
            <person name="Courtney L."/>
            <person name="Cloud J."/>
            <person name="Abbott A."/>
            <person name="Scott K."/>
            <person name="Johnson D."/>
            <person name="Minx P."/>
            <person name="Bentley D."/>
            <person name="Fulton B."/>
            <person name="Miller N."/>
            <person name="Greco T."/>
            <person name="Kemp K."/>
            <person name="Kramer J."/>
            <person name="Fulton L."/>
            <person name="Mardis E."/>
            <person name="Dante M."/>
            <person name="Pepin K."/>
            <person name="Hillier L.W."/>
            <person name="Nelson J."/>
            <person name="Spieth J."/>
            <person name="Ryan E."/>
            <person name="Andrews S."/>
            <person name="Geisel C."/>
            <person name="Layman D."/>
            <person name="Du H."/>
            <person name="Ali J."/>
            <person name="Berghoff A."/>
            <person name="Jones K."/>
            <person name="Drone K."/>
            <person name="Cotton M."/>
            <person name="Joshu C."/>
            <person name="Antonoiu B."/>
            <person name="Zidanic M."/>
            <person name="Strong C."/>
            <person name="Sun H."/>
            <person name="Lamar B."/>
            <person name="Yordan C."/>
            <person name="Ma P."/>
            <person name="Zhong J."/>
            <person name="Preston R."/>
            <person name="Vil D."/>
            <person name="Shekher M."/>
            <person name="Matero A."/>
            <person name="Shah R."/>
            <person name="Swaby I.K."/>
            <person name="O'Shaughnessy A."/>
            <person name="Rodriguez M."/>
            <person name="Hoffman J."/>
            <person name="Till S."/>
            <person name="Granat S."/>
            <person name="Shohdy N."/>
            <person name="Hasegawa A."/>
            <person name="Hameed A."/>
            <person name="Lodhi M."/>
            <person name="Johnson A."/>
            <person name="Chen E."/>
            <person name="Marra M.A."/>
            <person name="Martienssen R."/>
            <person name="McCombie W.R."/>
        </authorList>
    </citation>
    <scope>NUCLEOTIDE SEQUENCE [LARGE SCALE GENOMIC DNA]</scope>
    <source>
        <strain>cv. Columbia</strain>
    </source>
</reference>
<reference key="2">
    <citation type="journal article" date="2017" name="Plant J.">
        <title>Araport11: a complete reannotation of the Arabidopsis thaliana reference genome.</title>
        <authorList>
            <person name="Cheng C.Y."/>
            <person name="Krishnakumar V."/>
            <person name="Chan A.P."/>
            <person name="Thibaud-Nissen F."/>
            <person name="Schobel S."/>
            <person name="Town C.D."/>
        </authorList>
    </citation>
    <scope>GENOME REANNOTATION</scope>
    <source>
        <strain>cv. Columbia</strain>
    </source>
</reference>
<reference key="3">
    <citation type="submission" date="2004-09" db="EMBL/GenBank/DDBJ databases">
        <title>Large-scale analysis of RIKEN Arabidopsis full-length (RAFL) cDNAs.</title>
        <authorList>
            <person name="Totoki Y."/>
            <person name="Seki M."/>
            <person name="Ishida J."/>
            <person name="Nakajima M."/>
            <person name="Enju A."/>
            <person name="Kamiya A."/>
            <person name="Narusaka M."/>
            <person name="Shin-i T."/>
            <person name="Nakagawa M."/>
            <person name="Sakamoto N."/>
            <person name="Oishi K."/>
            <person name="Kohara Y."/>
            <person name="Kobayashi M."/>
            <person name="Toyoda A."/>
            <person name="Sakaki Y."/>
            <person name="Sakurai T."/>
            <person name="Iida K."/>
            <person name="Akiyama K."/>
            <person name="Satou M."/>
            <person name="Toyoda T."/>
            <person name="Konagaya A."/>
            <person name="Carninci P."/>
            <person name="Kawai J."/>
            <person name="Hayashizaki Y."/>
            <person name="Shinozaki K."/>
        </authorList>
    </citation>
    <scope>NUCLEOTIDE SEQUENCE [LARGE SCALE MRNA]</scope>
    <source>
        <strain>cv. Columbia</strain>
    </source>
</reference>
<reference key="4">
    <citation type="journal article" date="2009" name="Plant Cell Physiol.">
        <title>Epidermal cell density is autoregulated via a secretory peptide, EPIDERMAL PATTERNING FACTOR 2 in Arabidopsis leaves.</title>
        <authorList>
            <person name="Hara K."/>
            <person name="Yokoo T."/>
            <person name="Kajita R."/>
            <person name="Onishi T."/>
            <person name="Yahata S."/>
            <person name="Peterson K.M."/>
            <person name="Torii K.U."/>
            <person name="Kakimoto T."/>
        </authorList>
    </citation>
    <scope>GENE FAMILY</scope>
    <scope>NOMENCLATURE</scope>
</reference>
<reference key="5">
    <citation type="journal article" date="2010" name="Nature">
        <title>Stomagen positively regulates stomatal density in Arabidopsis.</title>
        <authorList>
            <person name="Sugano S.S."/>
            <person name="Shimada T."/>
            <person name="Imai Y."/>
            <person name="Okawa K."/>
            <person name="Tamai A."/>
            <person name="Mori M."/>
            <person name="Hara-Nishimura I."/>
        </authorList>
    </citation>
    <scope>FUNCTION</scope>
    <scope>PROTEIN SEQUENCE OF 58-67</scope>
    <scope>PROCESSING</scope>
    <scope>DISRUPTION PHENOTYPE</scope>
    <scope>TISSUE SPECIFICITY</scope>
</reference>
<reference key="6">
    <citation type="journal article" date="2010" name="Plant Cell Physiol.">
        <title>Stomatal density is controlled by a mesophyll-derived signaling molecule.</title>
        <authorList>
            <person name="Kondo T."/>
            <person name="Kajita R."/>
            <person name="Miyazaki A."/>
            <person name="Hokoyama M."/>
            <person name="Nakamura-Miura T."/>
            <person name="Mizuno S."/>
            <person name="Masuda Y."/>
            <person name="Irie K."/>
            <person name="Tanaka Y."/>
            <person name="Takada S."/>
            <person name="Kakimoto T."/>
            <person name="Sakagami Y."/>
        </authorList>
    </citation>
    <scope>FUNCTION</scope>
    <scope>TISSUE SPECIFICITY</scope>
    <scope>DISULFIDE BOND</scope>
    <scope>SUBCELLULAR LOCATION</scope>
</reference>
<reference key="7">
    <citation type="journal article" date="2011" name="Nat. Commun.">
        <title>The NMR structure of stomagen reveals the basis of stomatal density regulation by plant peptide hormones.</title>
        <authorList>
            <person name="Ohki S."/>
            <person name="Takeuchi M."/>
            <person name="Mori M."/>
        </authorList>
    </citation>
    <scope>FUNCTION</scope>
    <scope>STRUCTURE BY NMR OF 58-102</scope>
    <scope>DISULFIDE BOND</scope>
    <scope>MUTAGENESIS OF CYS-65; CYS-70; CYS-73; CYS-77; GLU-85; ASP-88; CYS-98 AND CYS-100</scope>
    <scope>DOMAIN</scope>
</reference>
<reference key="8">
    <citation type="journal article" date="2014" name="Nature">
        <title>Carbonic anhydrases, EPF2 and a novel protease mediate CO2 control of stomatal development.</title>
        <authorList>
            <person name="Engineer C.B."/>
            <person name="Ghassemian M."/>
            <person name="Anderson J.C."/>
            <person name="Peck S.C."/>
            <person name="Hu H."/>
            <person name="Schroeder J.I."/>
        </authorList>
    </citation>
    <scope>LACK OF CLEAVAGE</scope>
</reference>
<reference key="9">
    <citation type="journal article" date="2015" name="Nature">
        <title>Competitive binding of antagonistic peptides fine-tunes stomatal patterning.</title>
        <authorList>
            <person name="Lee J.S."/>
            <person name="Hnilova M."/>
            <person name="Maes M."/>
            <person name="Lin Y.C."/>
            <person name="Putarjunan A."/>
            <person name="Han S.K."/>
            <person name="Avila J."/>
            <person name="Torii K.U."/>
        </authorList>
    </citation>
    <scope>FUNCTION</scope>
    <scope>INTERACTION WITH ERECTA AND TMM</scope>
</reference>